<accession>A3QC89</accession>
<sequence length="874" mass="95068">MYQTTAALRSAFLEFFRRNGHQVVDSSSLVPGNDPTLLFTNAGMNQFKDVFLGEDKRDYSRATTAQRCVRAGGKHNDLDNVGYTARHHTFFEMLGNFSFGDYFKQDAIRFAWTFLTEELKLPKERLCVTVYETDDEAFEIWNKEIGVAAENIIRIGDNKGAAYASDNFWQMGDTGPCGPCTEIFYDHGEHIWGGRPGTPEEDGDRFIEIWNIVFMQYNRQADGTMDPLPKPSVDTGMGIERIAAIMQGVHSNYEIDIFQSLIKKTAEILGVTDLENKSLRVVADHIRSCAFLVADGVMPSNEGRGYVLRRIIRRAVRHGNKLGATEAFFYKLVPTLIEVMGDAAKELVATQAIVEKALKAEEEQFARTLERGLGILDNALSQLEGKELDGETAFKLYDTYGFPVDLTADVCRERDITVDEAGFEAAMAEQRSRAQAAGQFDTDYNDSLKIDAETEFCGYSDLNGEAKVIGLYVDGQAVDALAEGDQGVVVLDSTPFYGESGGQCGDKGLLSAEGVEFEVKDTQKYGQAMGHIGLVKAGSIAMGQTLNAAVDKKLRHRTELNHSVTHLLHAALRQVLGTHVSQKGSLVEPERLRFDFSHFEAVKREELKQVEDLVNTQIRRNHELKAEVMDIDQAKEKGAMALFGEKYDSQVRVVTMGDFSIELCGGTHVGRTGDIGLFKITSEGGIAAGIRRIEAVTGAAAIAYVGEQQAQLEQAASLLKGDSASVVAKLKAQLDKTKQLEKELSQLKDKLAAATSADLAGEAQELAGVKVLVKLLEGVEAGALRGLQDELKQKLQSGIVVLGIAGDAKVNLIAGVTKDLTGKVKAGELVAMVAAQVGGKGGGRPDMAQAGGSEPEKLAGALDSVIPWLSERLA</sequence>
<proteinExistence type="inferred from homology"/>
<organism>
    <name type="scientific">Shewanella loihica (strain ATCC BAA-1088 / PV-4)</name>
    <dbReference type="NCBI Taxonomy" id="323850"/>
    <lineage>
        <taxon>Bacteria</taxon>
        <taxon>Pseudomonadati</taxon>
        <taxon>Pseudomonadota</taxon>
        <taxon>Gammaproteobacteria</taxon>
        <taxon>Alteromonadales</taxon>
        <taxon>Shewanellaceae</taxon>
        <taxon>Shewanella</taxon>
    </lineage>
</organism>
<protein>
    <recommendedName>
        <fullName evidence="1">Alanine--tRNA ligase</fullName>
        <ecNumber evidence="1">6.1.1.7</ecNumber>
    </recommendedName>
    <alternativeName>
        <fullName evidence="1">Alanyl-tRNA synthetase</fullName>
        <shortName evidence="1">AlaRS</shortName>
    </alternativeName>
</protein>
<gene>
    <name evidence="1" type="primary">alaS</name>
    <name type="ordered locus">Shew_1217</name>
</gene>
<name>SYA_SHELP</name>
<feature type="chain" id="PRO_0000347787" description="Alanine--tRNA ligase">
    <location>
        <begin position="1"/>
        <end position="874"/>
    </location>
</feature>
<feature type="binding site" evidence="1">
    <location>
        <position position="562"/>
    </location>
    <ligand>
        <name>Zn(2+)</name>
        <dbReference type="ChEBI" id="CHEBI:29105"/>
    </ligand>
</feature>
<feature type="binding site" evidence="1">
    <location>
        <position position="566"/>
    </location>
    <ligand>
        <name>Zn(2+)</name>
        <dbReference type="ChEBI" id="CHEBI:29105"/>
    </ligand>
</feature>
<feature type="binding site" evidence="1">
    <location>
        <position position="664"/>
    </location>
    <ligand>
        <name>Zn(2+)</name>
        <dbReference type="ChEBI" id="CHEBI:29105"/>
    </ligand>
</feature>
<feature type="binding site" evidence="1">
    <location>
        <position position="668"/>
    </location>
    <ligand>
        <name>Zn(2+)</name>
        <dbReference type="ChEBI" id="CHEBI:29105"/>
    </ligand>
</feature>
<evidence type="ECO:0000255" key="1">
    <source>
        <dbReference type="HAMAP-Rule" id="MF_00036"/>
    </source>
</evidence>
<dbReference type="EC" id="6.1.1.7" evidence="1"/>
<dbReference type="EMBL" id="CP000606">
    <property type="protein sequence ID" value="ABO23087.1"/>
    <property type="molecule type" value="Genomic_DNA"/>
</dbReference>
<dbReference type="RefSeq" id="WP_011865019.1">
    <property type="nucleotide sequence ID" value="NC_009092.1"/>
</dbReference>
<dbReference type="SMR" id="A3QC89"/>
<dbReference type="STRING" id="323850.Shew_1217"/>
<dbReference type="KEGG" id="slo:Shew_1217"/>
<dbReference type="eggNOG" id="COG0013">
    <property type="taxonomic scope" value="Bacteria"/>
</dbReference>
<dbReference type="HOGENOM" id="CLU_004485_1_1_6"/>
<dbReference type="OrthoDB" id="9803884at2"/>
<dbReference type="Proteomes" id="UP000001558">
    <property type="component" value="Chromosome"/>
</dbReference>
<dbReference type="GO" id="GO:0005829">
    <property type="term" value="C:cytosol"/>
    <property type="evidence" value="ECO:0007669"/>
    <property type="project" value="TreeGrafter"/>
</dbReference>
<dbReference type="GO" id="GO:0004813">
    <property type="term" value="F:alanine-tRNA ligase activity"/>
    <property type="evidence" value="ECO:0007669"/>
    <property type="project" value="UniProtKB-UniRule"/>
</dbReference>
<dbReference type="GO" id="GO:0002161">
    <property type="term" value="F:aminoacyl-tRNA deacylase activity"/>
    <property type="evidence" value="ECO:0007669"/>
    <property type="project" value="TreeGrafter"/>
</dbReference>
<dbReference type="GO" id="GO:0005524">
    <property type="term" value="F:ATP binding"/>
    <property type="evidence" value="ECO:0007669"/>
    <property type="project" value="UniProtKB-UniRule"/>
</dbReference>
<dbReference type="GO" id="GO:0000049">
    <property type="term" value="F:tRNA binding"/>
    <property type="evidence" value="ECO:0007669"/>
    <property type="project" value="UniProtKB-KW"/>
</dbReference>
<dbReference type="GO" id="GO:0008270">
    <property type="term" value="F:zinc ion binding"/>
    <property type="evidence" value="ECO:0007669"/>
    <property type="project" value="UniProtKB-UniRule"/>
</dbReference>
<dbReference type="GO" id="GO:0006419">
    <property type="term" value="P:alanyl-tRNA aminoacylation"/>
    <property type="evidence" value="ECO:0007669"/>
    <property type="project" value="UniProtKB-UniRule"/>
</dbReference>
<dbReference type="GO" id="GO:0045892">
    <property type="term" value="P:negative regulation of DNA-templated transcription"/>
    <property type="evidence" value="ECO:0007669"/>
    <property type="project" value="TreeGrafter"/>
</dbReference>
<dbReference type="CDD" id="cd00673">
    <property type="entry name" value="AlaRS_core"/>
    <property type="match status" value="1"/>
</dbReference>
<dbReference type="FunFam" id="2.40.30.130:FF:000001">
    <property type="entry name" value="Alanine--tRNA ligase"/>
    <property type="match status" value="1"/>
</dbReference>
<dbReference type="FunFam" id="3.10.310.40:FF:000001">
    <property type="entry name" value="Alanine--tRNA ligase"/>
    <property type="match status" value="1"/>
</dbReference>
<dbReference type="FunFam" id="3.30.54.20:FF:000001">
    <property type="entry name" value="Alanine--tRNA ligase"/>
    <property type="match status" value="1"/>
</dbReference>
<dbReference type="FunFam" id="3.30.930.10:FF:000004">
    <property type="entry name" value="Alanine--tRNA ligase"/>
    <property type="match status" value="1"/>
</dbReference>
<dbReference type="FunFam" id="3.30.980.10:FF:000004">
    <property type="entry name" value="Alanine--tRNA ligase, cytoplasmic"/>
    <property type="match status" value="1"/>
</dbReference>
<dbReference type="Gene3D" id="2.40.30.130">
    <property type="match status" value="1"/>
</dbReference>
<dbReference type="Gene3D" id="3.10.310.40">
    <property type="match status" value="1"/>
</dbReference>
<dbReference type="Gene3D" id="3.30.54.20">
    <property type="match status" value="1"/>
</dbReference>
<dbReference type="Gene3D" id="6.10.250.550">
    <property type="match status" value="1"/>
</dbReference>
<dbReference type="Gene3D" id="3.30.930.10">
    <property type="entry name" value="Bira Bifunctional Protein, Domain 2"/>
    <property type="match status" value="1"/>
</dbReference>
<dbReference type="Gene3D" id="3.30.980.10">
    <property type="entry name" value="Threonyl-trna Synthetase, Chain A, domain 2"/>
    <property type="match status" value="1"/>
</dbReference>
<dbReference type="HAMAP" id="MF_00036_B">
    <property type="entry name" value="Ala_tRNA_synth_B"/>
    <property type="match status" value="1"/>
</dbReference>
<dbReference type="InterPro" id="IPR045864">
    <property type="entry name" value="aa-tRNA-synth_II/BPL/LPL"/>
</dbReference>
<dbReference type="InterPro" id="IPR002318">
    <property type="entry name" value="Ala-tRNA-lgiase_IIc"/>
</dbReference>
<dbReference type="InterPro" id="IPR018162">
    <property type="entry name" value="Ala-tRNA-ligase_IIc_anticod-bd"/>
</dbReference>
<dbReference type="InterPro" id="IPR018165">
    <property type="entry name" value="Ala-tRNA-synth_IIc_core"/>
</dbReference>
<dbReference type="InterPro" id="IPR018164">
    <property type="entry name" value="Ala-tRNA-synth_IIc_N"/>
</dbReference>
<dbReference type="InterPro" id="IPR050058">
    <property type="entry name" value="Ala-tRNA_ligase"/>
</dbReference>
<dbReference type="InterPro" id="IPR023033">
    <property type="entry name" value="Ala_tRNA_ligase_euk/bac"/>
</dbReference>
<dbReference type="InterPro" id="IPR003156">
    <property type="entry name" value="DHHA1_dom"/>
</dbReference>
<dbReference type="InterPro" id="IPR018163">
    <property type="entry name" value="Thr/Ala-tRNA-synth_IIc_edit"/>
</dbReference>
<dbReference type="InterPro" id="IPR009000">
    <property type="entry name" value="Transl_B-barrel_sf"/>
</dbReference>
<dbReference type="InterPro" id="IPR012947">
    <property type="entry name" value="tRNA_SAD"/>
</dbReference>
<dbReference type="NCBIfam" id="TIGR00344">
    <property type="entry name" value="alaS"/>
    <property type="match status" value="1"/>
</dbReference>
<dbReference type="PANTHER" id="PTHR11777:SF9">
    <property type="entry name" value="ALANINE--TRNA LIGASE, CYTOPLASMIC"/>
    <property type="match status" value="1"/>
</dbReference>
<dbReference type="PANTHER" id="PTHR11777">
    <property type="entry name" value="ALANYL-TRNA SYNTHETASE"/>
    <property type="match status" value="1"/>
</dbReference>
<dbReference type="Pfam" id="PF02272">
    <property type="entry name" value="DHHA1"/>
    <property type="match status" value="1"/>
</dbReference>
<dbReference type="Pfam" id="PF01411">
    <property type="entry name" value="tRNA-synt_2c"/>
    <property type="match status" value="1"/>
</dbReference>
<dbReference type="Pfam" id="PF07973">
    <property type="entry name" value="tRNA_SAD"/>
    <property type="match status" value="1"/>
</dbReference>
<dbReference type="PRINTS" id="PR00980">
    <property type="entry name" value="TRNASYNTHALA"/>
</dbReference>
<dbReference type="SMART" id="SM00863">
    <property type="entry name" value="tRNA_SAD"/>
    <property type="match status" value="1"/>
</dbReference>
<dbReference type="SUPFAM" id="SSF55681">
    <property type="entry name" value="Class II aaRS and biotin synthetases"/>
    <property type="match status" value="1"/>
</dbReference>
<dbReference type="SUPFAM" id="SSF101353">
    <property type="entry name" value="Putative anticodon-binding domain of alanyl-tRNA synthetase (AlaRS)"/>
    <property type="match status" value="1"/>
</dbReference>
<dbReference type="SUPFAM" id="SSF55186">
    <property type="entry name" value="ThrRS/AlaRS common domain"/>
    <property type="match status" value="1"/>
</dbReference>
<dbReference type="SUPFAM" id="SSF50447">
    <property type="entry name" value="Translation proteins"/>
    <property type="match status" value="1"/>
</dbReference>
<dbReference type="PROSITE" id="PS50860">
    <property type="entry name" value="AA_TRNA_LIGASE_II_ALA"/>
    <property type="match status" value="1"/>
</dbReference>
<keyword id="KW-0030">Aminoacyl-tRNA synthetase</keyword>
<keyword id="KW-0067">ATP-binding</keyword>
<keyword id="KW-0963">Cytoplasm</keyword>
<keyword id="KW-0436">Ligase</keyword>
<keyword id="KW-0479">Metal-binding</keyword>
<keyword id="KW-0547">Nucleotide-binding</keyword>
<keyword id="KW-0648">Protein biosynthesis</keyword>
<keyword id="KW-1185">Reference proteome</keyword>
<keyword id="KW-0694">RNA-binding</keyword>
<keyword id="KW-0820">tRNA-binding</keyword>
<keyword id="KW-0862">Zinc</keyword>
<comment type="function">
    <text evidence="1">Catalyzes the attachment of alanine to tRNA(Ala) in a two-step reaction: alanine is first activated by ATP to form Ala-AMP and then transferred to the acceptor end of tRNA(Ala). Also edits incorrectly charged Ser-tRNA(Ala) and Gly-tRNA(Ala) via its editing domain.</text>
</comment>
<comment type="catalytic activity">
    <reaction evidence="1">
        <text>tRNA(Ala) + L-alanine + ATP = L-alanyl-tRNA(Ala) + AMP + diphosphate</text>
        <dbReference type="Rhea" id="RHEA:12540"/>
        <dbReference type="Rhea" id="RHEA-COMP:9657"/>
        <dbReference type="Rhea" id="RHEA-COMP:9923"/>
        <dbReference type="ChEBI" id="CHEBI:30616"/>
        <dbReference type="ChEBI" id="CHEBI:33019"/>
        <dbReference type="ChEBI" id="CHEBI:57972"/>
        <dbReference type="ChEBI" id="CHEBI:78442"/>
        <dbReference type="ChEBI" id="CHEBI:78497"/>
        <dbReference type="ChEBI" id="CHEBI:456215"/>
        <dbReference type="EC" id="6.1.1.7"/>
    </reaction>
</comment>
<comment type="cofactor">
    <cofactor evidence="1">
        <name>Zn(2+)</name>
        <dbReference type="ChEBI" id="CHEBI:29105"/>
    </cofactor>
    <text evidence="1">Binds 1 zinc ion per subunit.</text>
</comment>
<comment type="subcellular location">
    <subcellularLocation>
        <location evidence="1">Cytoplasm</location>
    </subcellularLocation>
</comment>
<comment type="domain">
    <text evidence="1">Consists of three domains; the N-terminal catalytic domain, the editing domain and the C-terminal C-Ala domain. The editing domain removes incorrectly charged amino acids, while the C-Ala domain, along with tRNA(Ala), serves as a bridge to cooperatively bring together the editing and aminoacylation centers thus stimulating deacylation of misacylated tRNAs.</text>
</comment>
<comment type="similarity">
    <text evidence="1">Belongs to the class-II aminoacyl-tRNA synthetase family.</text>
</comment>
<reference key="1">
    <citation type="submission" date="2007-03" db="EMBL/GenBank/DDBJ databases">
        <title>Complete sequence of Shewanella loihica PV-4.</title>
        <authorList>
            <consortium name="US DOE Joint Genome Institute"/>
            <person name="Copeland A."/>
            <person name="Lucas S."/>
            <person name="Lapidus A."/>
            <person name="Barry K."/>
            <person name="Detter J.C."/>
            <person name="Glavina del Rio T."/>
            <person name="Hammon N."/>
            <person name="Israni S."/>
            <person name="Dalin E."/>
            <person name="Tice H."/>
            <person name="Pitluck S."/>
            <person name="Chain P."/>
            <person name="Malfatti S."/>
            <person name="Shin M."/>
            <person name="Vergez L."/>
            <person name="Schmutz J."/>
            <person name="Larimer F."/>
            <person name="Land M."/>
            <person name="Hauser L."/>
            <person name="Kyrpides N."/>
            <person name="Mikhailova N."/>
            <person name="Romine M.F."/>
            <person name="Serres G."/>
            <person name="Fredrickson J."/>
            <person name="Tiedje J."/>
            <person name="Richardson P."/>
        </authorList>
    </citation>
    <scope>NUCLEOTIDE SEQUENCE [LARGE SCALE GENOMIC DNA]</scope>
    <source>
        <strain>ATCC BAA-1088 / PV-4</strain>
    </source>
</reference>